<dbReference type="EMBL" id="AL009126">
    <property type="protein sequence ID" value="CAB15089.1"/>
    <property type="molecule type" value="Genomic_DNA"/>
</dbReference>
<dbReference type="PIR" id="A70007">
    <property type="entry name" value="A70007"/>
</dbReference>
<dbReference type="RefSeq" id="NP_390989.1">
    <property type="nucleotide sequence ID" value="NC_000964.3"/>
</dbReference>
<dbReference type="RefSeq" id="WP_003222348.1">
    <property type="nucleotide sequence ID" value="NZ_OZ025638.1"/>
</dbReference>
<dbReference type="SMR" id="O32082"/>
<dbReference type="FunCoup" id="O32082">
    <property type="interactions" value="35"/>
</dbReference>
<dbReference type="jPOST" id="O32082"/>
<dbReference type="PaxDb" id="224308-BSU31110"/>
<dbReference type="EnsemblBacteria" id="CAB15089">
    <property type="protein sequence ID" value="CAB15089"/>
    <property type="gene ID" value="BSU_31110"/>
</dbReference>
<dbReference type="GeneID" id="937150"/>
<dbReference type="KEGG" id="bsu:BSU31110"/>
<dbReference type="PATRIC" id="fig|224308.179.peg.3371"/>
<dbReference type="eggNOG" id="COG4682">
    <property type="taxonomic scope" value="Bacteria"/>
</dbReference>
<dbReference type="InParanoid" id="O32082"/>
<dbReference type="OrthoDB" id="3295178at2"/>
<dbReference type="PhylomeDB" id="O32082"/>
<dbReference type="BioCyc" id="BSUB:BSU31110-MONOMER"/>
<dbReference type="PRO" id="PR:O32082"/>
<dbReference type="Proteomes" id="UP000001570">
    <property type="component" value="Chromosome"/>
</dbReference>
<dbReference type="GO" id="GO:0005886">
    <property type="term" value="C:plasma membrane"/>
    <property type="evidence" value="ECO:0000318"/>
    <property type="project" value="GO_Central"/>
</dbReference>
<dbReference type="GO" id="GO:0006974">
    <property type="term" value="P:DNA damage response"/>
    <property type="evidence" value="ECO:0000318"/>
    <property type="project" value="GO_Central"/>
</dbReference>
<dbReference type="InterPro" id="IPR038972">
    <property type="entry name" value="YiaA-like"/>
</dbReference>
<dbReference type="InterPro" id="IPR008024">
    <property type="entry name" value="YiaAB"/>
</dbReference>
<dbReference type="PANTHER" id="PTHR37290:SF1">
    <property type="entry name" value="INNER MEMBRANE PROTEIN YIAA"/>
    <property type="match status" value="1"/>
</dbReference>
<dbReference type="PANTHER" id="PTHR37290">
    <property type="entry name" value="INNER MEMBRANE PROTEIN YIAA-RELATED"/>
    <property type="match status" value="1"/>
</dbReference>
<dbReference type="Pfam" id="PF05360">
    <property type="entry name" value="YiaAB"/>
    <property type="match status" value="1"/>
</dbReference>
<feature type="chain" id="PRO_0000388993" description="Uncharacterized membrane protein YubF">
    <location>
        <begin position="1"/>
        <end position="87"/>
    </location>
</feature>
<feature type="transmembrane region" description="Helical" evidence="1">
    <location>
        <begin position="10"/>
        <end position="30"/>
    </location>
</feature>
<feature type="transmembrane region" description="Helical" evidence="1">
    <location>
        <begin position="43"/>
        <end position="63"/>
    </location>
</feature>
<gene>
    <name type="primary">yubF</name>
    <name type="ordered locus">BSU31110</name>
</gene>
<organism>
    <name type="scientific">Bacillus subtilis (strain 168)</name>
    <dbReference type="NCBI Taxonomy" id="224308"/>
    <lineage>
        <taxon>Bacteria</taxon>
        <taxon>Bacillati</taxon>
        <taxon>Bacillota</taxon>
        <taxon>Bacilli</taxon>
        <taxon>Bacillales</taxon>
        <taxon>Bacillaceae</taxon>
        <taxon>Bacillus</taxon>
    </lineage>
</organism>
<sequence>MQKYRRRNTVAFTVLAYFTFFAGVFLFSIGLYNADNLELNEKGYYIAVMILVAVGAILTQKVTRDNAEDNEIIAEQEKRQNQSHIES</sequence>
<proteinExistence type="predicted"/>
<name>YUBF_BACSU</name>
<evidence type="ECO:0000255" key="1"/>
<evidence type="ECO:0000305" key="2"/>
<keyword id="KW-1003">Cell membrane</keyword>
<keyword id="KW-0472">Membrane</keyword>
<keyword id="KW-1185">Reference proteome</keyword>
<keyword id="KW-0812">Transmembrane</keyword>
<keyword id="KW-1133">Transmembrane helix</keyword>
<accession>O32082</accession>
<reference key="1">
    <citation type="journal article" date="1997" name="Nature">
        <title>The complete genome sequence of the Gram-positive bacterium Bacillus subtilis.</title>
        <authorList>
            <person name="Kunst F."/>
            <person name="Ogasawara N."/>
            <person name="Moszer I."/>
            <person name="Albertini A.M."/>
            <person name="Alloni G."/>
            <person name="Azevedo V."/>
            <person name="Bertero M.G."/>
            <person name="Bessieres P."/>
            <person name="Bolotin A."/>
            <person name="Borchert S."/>
            <person name="Borriss R."/>
            <person name="Boursier L."/>
            <person name="Brans A."/>
            <person name="Braun M."/>
            <person name="Brignell S.C."/>
            <person name="Bron S."/>
            <person name="Brouillet S."/>
            <person name="Bruschi C.V."/>
            <person name="Caldwell B."/>
            <person name="Capuano V."/>
            <person name="Carter N.M."/>
            <person name="Choi S.-K."/>
            <person name="Codani J.-J."/>
            <person name="Connerton I.F."/>
            <person name="Cummings N.J."/>
            <person name="Daniel R.A."/>
            <person name="Denizot F."/>
            <person name="Devine K.M."/>
            <person name="Duesterhoeft A."/>
            <person name="Ehrlich S.D."/>
            <person name="Emmerson P.T."/>
            <person name="Entian K.-D."/>
            <person name="Errington J."/>
            <person name="Fabret C."/>
            <person name="Ferrari E."/>
            <person name="Foulger D."/>
            <person name="Fritz C."/>
            <person name="Fujita M."/>
            <person name="Fujita Y."/>
            <person name="Fuma S."/>
            <person name="Galizzi A."/>
            <person name="Galleron N."/>
            <person name="Ghim S.-Y."/>
            <person name="Glaser P."/>
            <person name="Goffeau A."/>
            <person name="Golightly E.J."/>
            <person name="Grandi G."/>
            <person name="Guiseppi G."/>
            <person name="Guy B.J."/>
            <person name="Haga K."/>
            <person name="Haiech J."/>
            <person name="Harwood C.R."/>
            <person name="Henaut A."/>
            <person name="Hilbert H."/>
            <person name="Holsappel S."/>
            <person name="Hosono S."/>
            <person name="Hullo M.-F."/>
            <person name="Itaya M."/>
            <person name="Jones L.-M."/>
            <person name="Joris B."/>
            <person name="Karamata D."/>
            <person name="Kasahara Y."/>
            <person name="Klaerr-Blanchard M."/>
            <person name="Klein C."/>
            <person name="Kobayashi Y."/>
            <person name="Koetter P."/>
            <person name="Koningstein G."/>
            <person name="Krogh S."/>
            <person name="Kumano M."/>
            <person name="Kurita K."/>
            <person name="Lapidus A."/>
            <person name="Lardinois S."/>
            <person name="Lauber J."/>
            <person name="Lazarevic V."/>
            <person name="Lee S.-M."/>
            <person name="Levine A."/>
            <person name="Liu H."/>
            <person name="Masuda S."/>
            <person name="Mauel C."/>
            <person name="Medigue C."/>
            <person name="Medina N."/>
            <person name="Mellado R.P."/>
            <person name="Mizuno M."/>
            <person name="Moestl D."/>
            <person name="Nakai S."/>
            <person name="Noback M."/>
            <person name="Noone D."/>
            <person name="O'Reilly M."/>
            <person name="Ogawa K."/>
            <person name="Ogiwara A."/>
            <person name="Oudega B."/>
            <person name="Park S.-H."/>
            <person name="Parro V."/>
            <person name="Pohl T.M."/>
            <person name="Portetelle D."/>
            <person name="Porwollik S."/>
            <person name="Prescott A.M."/>
            <person name="Presecan E."/>
            <person name="Pujic P."/>
            <person name="Purnelle B."/>
            <person name="Rapoport G."/>
            <person name="Rey M."/>
            <person name="Reynolds S."/>
            <person name="Rieger M."/>
            <person name="Rivolta C."/>
            <person name="Rocha E."/>
            <person name="Roche B."/>
            <person name="Rose M."/>
            <person name="Sadaie Y."/>
            <person name="Sato T."/>
            <person name="Scanlan E."/>
            <person name="Schleich S."/>
            <person name="Schroeter R."/>
            <person name="Scoffone F."/>
            <person name="Sekiguchi J."/>
            <person name="Sekowska A."/>
            <person name="Seror S.J."/>
            <person name="Serror P."/>
            <person name="Shin B.-S."/>
            <person name="Soldo B."/>
            <person name="Sorokin A."/>
            <person name="Tacconi E."/>
            <person name="Takagi T."/>
            <person name="Takahashi H."/>
            <person name="Takemaru K."/>
            <person name="Takeuchi M."/>
            <person name="Tamakoshi A."/>
            <person name="Tanaka T."/>
            <person name="Terpstra P."/>
            <person name="Tognoni A."/>
            <person name="Tosato V."/>
            <person name="Uchiyama S."/>
            <person name="Vandenbol M."/>
            <person name="Vannier F."/>
            <person name="Vassarotti A."/>
            <person name="Viari A."/>
            <person name="Wambutt R."/>
            <person name="Wedler E."/>
            <person name="Wedler H."/>
            <person name="Weitzenegger T."/>
            <person name="Winters P."/>
            <person name="Wipat A."/>
            <person name="Yamamoto H."/>
            <person name="Yamane K."/>
            <person name="Yasumoto K."/>
            <person name="Yata K."/>
            <person name="Yoshida K."/>
            <person name="Yoshikawa H.-F."/>
            <person name="Zumstein E."/>
            <person name="Yoshikawa H."/>
            <person name="Danchin A."/>
        </authorList>
    </citation>
    <scope>NUCLEOTIDE SEQUENCE [LARGE SCALE GENOMIC DNA]</scope>
    <source>
        <strain>168</strain>
    </source>
</reference>
<protein>
    <recommendedName>
        <fullName>Uncharacterized membrane protein YubF</fullName>
    </recommendedName>
</protein>
<comment type="subcellular location">
    <subcellularLocation>
        <location evidence="2">Cell membrane</location>
        <topology evidence="2">Multi-pass membrane protein</topology>
    </subcellularLocation>
</comment>